<organism>
    <name type="scientific">Mus musculus</name>
    <name type="common">Mouse</name>
    <dbReference type="NCBI Taxonomy" id="10090"/>
    <lineage>
        <taxon>Eukaryota</taxon>
        <taxon>Metazoa</taxon>
        <taxon>Chordata</taxon>
        <taxon>Craniata</taxon>
        <taxon>Vertebrata</taxon>
        <taxon>Euteleostomi</taxon>
        <taxon>Mammalia</taxon>
        <taxon>Eutheria</taxon>
        <taxon>Euarchontoglires</taxon>
        <taxon>Glires</taxon>
        <taxon>Rodentia</taxon>
        <taxon>Myomorpha</taxon>
        <taxon>Muroidea</taxon>
        <taxon>Muridae</taxon>
        <taxon>Murinae</taxon>
        <taxon>Mus</taxon>
        <taxon>Mus</taxon>
    </lineage>
</organism>
<keyword id="KW-1064">Adaptive immunity</keyword>
<keyword id="KW-1015">Disulfide bond</keyword>
<keyword id="KW-0325">Glycoprotein</keyword>
<keyword id="KW-0391">Immunity</keyword>
<keyword id="KW-0472">Membrane</keyword>
<keyword id="KW-0491">MHC II</keyword>
<keyword id="KW-1185">Reference proteome</keyword>
<keyword id="KW-0812">Transmembrane</keyword>
<keyword id="KW-1133">Transmembrane helix</keyword>
<name>HA2S_MOUSE</name>
<dbReference type="EMBL" id="M11358">
    <property type="protein sequence ID" value="AAA39622.1"/>
    <property type="molecule type" value="mRNA"/>
</dbReference>
<dbReference type="PIR" id="I79358">
    <property type="entry name" value="I79358"/>
</dbReference>
<dbReference type="SMR" id="P14437"/>
<dbReference type="GlyCosmos" id="P14437">
    <property type="glycosylation" value="1 site, No reported glycans"/>
</dbReference>
<dbReference type="PhosphoSitePlus" id="P14437"/>
<dbReference type="jPOST" id="P14437"/>
<dbReference type="ProteomicsDB" id="269807"/>
<dbReference type="AGR" id="MGI:95895"/>
<dbReference type="MGI" id="MGI:95895">
    <property type="gene designation" value="H2-Aa"/>
</dbReference>
<dbReference type="OrthoDB" id="8925804at2759"/>
<dbReference type="ChiTaRS" id="H2-Aa">
    <property type="organism name" value="mouse"/>
</dbReference>
<dbReference type="Proteomes" id="UP000000589">
    <property type="component" value="Unplaced"/>
</dbReference>
<dbReference type="GO" id="GO:0009897">
    <property type="term" value="C:external side of plasma membrane"/>
    <property type="evidence" value="ECO:0000314"/>
    <property type="project" value="MGI"/>
</dbReference>
<dbReference type="GO" id="GO:0005764">
    <property type="term" value="C:lysosome"/>
    <property type="evidence" value="ECO:0000314"/>
    <property type="project" value="MGI"/>
</dbReference>
<dbReference type="GO" id="GO:0042613">
    <property type="term" value="C:MHC class II protein complex"/>
    <property type="evidence" value="ECO:0000314"/>
    <property type="project" value="MGI"/>
</dbReference>
<dbReference type="GO" id="GO:0005886">
    <property type="term" value="C:plasma membrane"/>
    <property type="evidence" value="ECO:0000314"/>
    <property type="project" value="MGI"/>
</dbReference>
<dbReference type="GO" id="GO:0042605">
    <property type="term" value="F:peptide antigen binding"/>
    <property type="evidence" value="ECO:0000314"/>
    <property type="project" value="MGI"/>
</dbReference>
<dbReference type="GO" id="GO:0002250">
    <property type="term" value="P:adaptive immune response"/>
    <property type="evidence" value="ECO:0007669"/>
    <property type="project" value="UniProtKB-KW"/>
</dbReference>
<dbReference type="GO" id="GO:0019882">
    <property type="term" value="P:antigen processing and presentation"/>
    <property type="evidence" value="ECO:0000314"/>
    <property type="project" value="MGI"/>
</dbReference>
<dbReference type="GO" id="GO:0019886">
    <property type="term" value="P:antigen processing and presentation of exogenous peptide antigen via MHC class II"/>
    <property type="evidence" value="ECO:0000314"/>
    <property type="project" value="MGI"/>
</dbReference>
<dbReference type="GO" id="GO:0048002">
    <property type="term" value="P:antigen processing and presentation of peptide antigen"/>
    <property type="evidence" value="ECO:0000314"/>
    <property type="project" value="MGI"/>
</dbReference>
<dbReference type="GO" id="GO:0045582">
    <property type="term" value="P:positive regulation of T cell differentiation"/>
    <property type="evidence" value="ECO:0000314"/>
    <property type="project" value="MGI"/>
</dbReference>
<dbReference type="CDD" id="cd21006">
    <property type="entry name" value="IgC1_MHC_II_alpha_I-A"/>
    <property type="match status" value="1"/>
</dbReference>
<dbReference type="FunFam" id="2.60.40.10:FF:000280">
    <property type="entry name" value="HLA class II histocompatibility antigen, DR alpha chain"/>
    <property type="match status" value="1"/>
</dbReference>
<dbReference type="FunFam" id="3.10.320.10:FF:000002">
    <property type="entry name" value="HLA class II histocompatibility antigen, DR alpha chain"/>
    <property type="match status" value="1"/>
</dbReference>
<dbReference type="Gene3D" id="3.10.320.10">
    <property type="entry name" value="Class II Histocompatibility Antigen, M Beta Chain, Chain B, domain 1"/>
    <property type="match status" value="1"/>
</dbReference>
<dbReference type="Gene3D" id="2.60.40.10">
    <property type="entry name" value="Immunoglobulins"/>
    <property type="match status" value="1"/>
</dbReference>
<dbReference type="InterPro" id="IPR007110">
    <property type="entry name" value="Ig-like_dom"/>
</dbReference>
<dbReference type="InterPro" id="IPR036179">
    <property type="entry name" value="Ig-like_dom_sf"/>
</dbReference>
<dbReference type="InterPro" id="IPR013783">
    <property type="entry name" value="Ig-like_fold"/>
</dbReference>
<dbReference type="InterPro" id="IPR003006">
    <property type="entry name" value="Ig/MHC_CS"/>
</dbReference>
<dbReference type="InterPro" id="IPR003597">
    <property type="entry name" value="Ig_C1-set"/>
</dbReference>
<dbReference type="InterPro" id="IPR050160">
    <property type="entry name" value="MHC/Immunoglobulin"/>
</dbReference>
<dbReference type="InterPro" id="IPR011162">
    <property type="entry name" value="MHC_I/II-like_Ag-recog"/>
</dbReference>
<dbReference type="InterPro" id="IPR014745">
    <property type="entry name" value="MHC_II_a/b_N"/>
</dbReference>
<dbReference type="InterPro" id="IPR001003">
    <property type="entry name" value="MHC_II_a_N"/>
</dbReference>
<dbReference type="PANTHER" id="PTHR19944:SF59">
    <property type="entry name" value="HLA CLASS II HISTOCOMPATIBILITY ANTIGEN, DQ ALPHA 1 CHAIN"/>
    <property type="match status" value="1"/>
</dbReference>
<dbReference type="PANTHER" id="PTHR19944">
    <property type="entry name" value="MHC CLASS II-RELATED"/>
    <property type="match status" value="1"/>
</dbReference>
<dbReference type="Pfam" id="PF07654">
    <property type="entry name" value="C1-set"/>
    <property type="match status" value="1"/>
</dbReference>
<dbReference type="Pfam" id="PF00993">
    <property type="entry name" value="MHC_II_alpha"/>
    <property type="match status" value="1"/>
</dbReference>
<dbReference type="SMART" id="SM00407">
    <property type="entry name" value="IGc1"/>
    <property type="match status" value="1"/>
</dbReference>
<dbReference type="SMART" id="SM00920">
    <property type="entry name" value="MHC_II_alpha"/>
    <property type="match status" value="1"/>
</dbReference>
<dbReference type="SUPFAM" id="SSF48726">
    <property type="entry name" value="Immunoglobulin"/>
    <property type="match status" value="1"/>
</dbReference>
<dbReference type="SUPFAM" id="SSF54452">
    <property type="entry name" value="MHC antigen-recognition domain"/>
    <property type="match status" value="1"/>
</dbReference>
<dbReference type="PROSITE" id="PS50835">
    <property type="entry name" value="IG_LIKE"/>
    <property type="match status" value="1"/>
</dbReference>
<dbReference type="PROSITE" id="PS00290">
    <property type="entry name" value="IG_MHC"/>
    <property type="match status" value="1"/>
</dbReference>
<comment type="subcellular location">
    <subcellularLocation>
        <location evidence="3">Membrane</location>
        <topology evidence="3">Single-pass type I membrane protein</topology>
    </subcellularLocation>
</comment>
<comment type="similarity">
    <text evidence="3">Belongs to the MHC class II family.</text>
</comment>
<reference key="1">
    <citation type="journal article" date="1985" name="Proc. Natl. Acad. Sci. U.S.A.">
        <title>A molecular basis for the Ia.2 and Ia.19 antigenic determinants.</title>
        <authorList>
            <person name="Landais D."/>
            <person name="Matthes H."/>
            <person name="Benoist C."/>
            <person name="Mathis D."/>
        </authorList>
    </citation>
    <scope>NUCLEOTIDE SEQUENCE [MRNA]</scope>
</reference>
<reference key="2">
    <citation type="journal article" date="2010" name="Cell">
        <title>A tissue-specific atlas of mouse protein phosphorylation and expression.</title>
        <authorList>
            <person name="Huttlin E.L."/>
            <person name="Jedrychowski M.P."/>
            <person name="Elias J.E."/>
            <person name="Goswami T."/>
            <person name="Rad R."/>
            <person name="Beausoleil S.A."/>
            <person name="Villen J."/>
            <person name="Haas W."/>
            <person name="Sowa M.E."/>
            <person name="Gygi S.P."/>
        </authorList>
    </citation>
    <scope>IDENTIFICATION BY MASS SPECTROMETRY [LARGE SCALE ANALYSIS]</scope>
    <source>
        <tissue>Heart</tissue>
        <tissue>Kidney</tissue>
        <tissue>Lung</tissue>
        <tissue>Spleen</tissue>
    </source>
</reference>
<evidence type="ECO:0000255" key="1"/>
<evidence type="ECO:0000255" key="2">
    <source>
        <dbReference type="PROSITE-ProRule" id="PRU00114"/>
    </source>
</evidence>
<evidence type="ECO:0000305" key="3"/>
<gene>
    <name type="primary">H2-Aa</name>
</gene>
<proteinExistence type="evidence at protein level"/>
<sequence length="233" mass="25801">EDDIEADHVGVYGTTVYQSPGDIGQYTHEFDGDEWFYVDLDKKETIWMLPEFGQLTSFDPQGGLQNIATGKYTLGILTKRSNSTPATNEAPQATVFPKSPVLLGQPNTLICFVDNIFPPVINITWLRNSKSVTDGVYETSFLVNRDHSFHKLSYLTFIPSDDDIYDCKVEHWGLEEPVLKHWEPEIPAPMSELTETVVCALGLSVGLVGIVVGTIFIIQGLRSGGTSRHPGPL</sequence>
<accession>P14437</accession>
<protein>
    <recommendedName>
        <fullName>H-2 class II histocompatibility antigen, A-S alpha chain</fullName>
    </recommendedName>
</protein>
<feature type="chain" id="PRO_0000080748" description="H-2 class II histocompatibility antigen, A-S alpha chain">
    <location>
        <begin position="1"/>
        <end position="233"/>
    </location>
</feature>
<feature type="topological domain" description="Extracellular" evidence="1">
    <location>
        <begin position="1"/>
        <end position="195"/>
    </location>
</feature>
<feature type="transmembrane region" description="Helical" evidence="1">
    <location>
        <begin position="196"/>
        <end position="221"/>
    </location>
</feature>
<feature type="topological domain" description="Cytoplasmic" evidence="1">
    <location>
        <begin position="222"/>
        <end position="233"/>
    </location>
</feature>
<feature type="domain" description="Ig-like C1-type">
    <location>
        <begin position="91"/>
        <end position="183"/>
    </location>
</feature>
<feature type="region of interest" description="Alpha-1">
    <location>
        <begin position="1"/>
        <end position="88"/>
    </location>
</feature>
<feature type="region of interest" description="Alpha-2">
    <location>
        <begin position="89"/>
        <end position="182"/>
    </location>
</feature>
<feature type="region of interest" description="Connecting peptide">
    <location>
        <begin position="183"/>
        <end position="195"/>
    </location>
</feature>
<feature type="glycosylation site" description="N-linked (GlcNAc...) asparagine" evidence="1">
    <location>
        <position position="122"/>
    </location>
</feature>
<feature type="disulfide bond" evidence="2">
    <location>
        <begin position="111"/>
        <end position="167"/>
    </location>
</feature>